<evidence type="ECO:0000255" key="1">
    <source>
        <dbReference type="HAMAP-Rule" id="MF_01197"/>
    </source>
</evidence>
<protein>
    <recommendedName>
        <fullName evidence="1">Cell division protein SepF</fullName>
    </recommendedName>
</protein>
<sequence length="150" mass="16561">MSGKILDKMAGLLGLEDDLEEDLEEVEEETAEEEVTPLISSNTKRNNKVVSIHTAVSAKVKIIKPCSYEEAVDICDELKNRKIIIVNTTDLETKIAQRLLDFMGGASYALGGSLEEVEKSVYILAPSTVEVTNELKSQLISSKGIFNWNK</sequence>
<comment type="function">
    <text evidence="1">Cell division protein that is part of the divisome complex and is recruited early to the Z-ring. Probably stimulates Z-ring formation, perhaps through the cross-linking of FtsZ protofilaments. Its function overlaps with FtsA.</text>
</comment>
<comment type="subunit">
    <text evidence="1">Homodimer. Interacts with FtsZ.</text>
</comment>
<comment type="subcellular location">
    <subcellularLocation>
        <location evidence="1">Cytoplasm</location>
    </subcellularLocation>
    <text evidence="1">Localizes to the division site, in a FtsZ-dependent manner.</text>
</comment>
<comment type="similarity">
    <text evidence="1">Belongs to the SepF family.</text>
</comment>
<keyword id="KW-0131">Cell cycle</keyword>
<keyword id="KW-0132">Cell division</keyword>
<keyword id="KW-0963">Cytoplasm</keyword>
<keyword id="KW-0717">Septation</keyword>
<reference key="1">
    <citation type="submission" date="2008-05" db="EMBL/GenBank/DDBJ databases">
        <title>Genome sequence of Clostridium botulinum Ba4 strain 657.</title>
        <authorList>
            <person name="Shrivastava S."/>
            <person name="Brown J.L."/>
            <person name="Bruce D."/>
            <person name="Detter C."/>
            <person name="Munk C."/>
            <person name="Smith L.A."/>
            <person name="Smith T.J."/>
            <person name="Sutton G."/>
            <person name="Brettin T.S."/>
        </authorList>
    </citation>
    <scope>NUCLEOTIDE SEQUENCE [LARGE SCALE GENOMIC DNA]</scope>
    <source>
        <strain>657 / Type Ba4</strain>
    </source>
</reference>
<dbReference type="EMBL" id="CP001083">
    <property type="protein sequence ID" value="ACQ55096.1"/>
    <property type="molecule type" value="Genomic_DNA"/>
</dbReference>
<dbReference type="RefSeq" id="WP_003360699.1">
    <property type="nucleotide sequence ID" value="NC_012658.1"/>
</dbReference>
<dbReference type="SMR" id="C3KVA2"/>
<dbReference type="GeneID" id="5185721"/>
<dbReference type="KEGG" id="cbi:CLJ_B1568"/>
<dbReference type="HOGENOM" id="CLU_078499_4_0_9"/>
<dbReference type="Proteomes" id="UP000002333">
    <property type="component" value="Chromosome"/>
</dbReference>
<dbReference type="GO" id="GO:0005737">
    <property type="term" value="C:cytoplasm"/>
    <property type="evidence" value="ECO:0007669"/>
    <property type="project" value="UniProtKB-SubCell"/>
</dbReference>
<dbReference type="GO" id="GO:0000917">
    <property type="term" value="P:division septum assembly"/>
    <property type="evidence" value="ECO:0007669"/>
    <property type="project" value="UniProtKB-KW"/>
</dbReference>
<dbReference type="GO" id="GO:0043093">
    <property type="term" value="P:FtsZ-dependent cytokinesis"/>
    <property type="evidence" value="ECO:0007669"/>
    <property type="project" value="UniProtKB-UniRule"/>
</dbReference>
<dbReference type="Gene3D" id="3.30.110.150">
    <property type="entry name" value="SepF-like protein"/>
    <property type="match status" value="1"/>
</dbReference>
<dbReference type="HAMAP" id="MF_01197">
    <property type="entry name" value="SepF"/>
    <property type="match status" value="1"/>
</dbReference>
<dbReference type="InterPro" id="IPR023052">
    <property type="entry name" value="Cell_div_SepF"/>
</dbReference>
<dbReference type="InterPro" id="IPR007561">
    <property type="entry name" value="Cell_div_SepF/SepF-rel"/>
</dbReference>
<dbReference type="InterPro" id="IPR038594">
    <property type="entry name" value="SepF-like_sf"/>
</dbReference>
<dbReference type="PANTHER" id="PTHR35798">
    <property type="entry name" value="CELL DIVISION PROTEIN SEPF"/>
    <property type="match status" value="1"/>
</dbReference>
<dbReference type="PANTHER" id="PTHR35798:SF1">
    <property type="entry name" value="CELL DIVISION PROTEIN SEPF"/>
    <property type="match status" value="1"/>
</dbReference>
<dbReference type="Pfam" id="PF04472">
    <property type="entry name" value="SepF"/>
    <property type="match status" value="1"/>
</dbReference>
<accession>C3KVA2</accession>
<organism>
    <name type="scientific">Clostridium botulinum (strain 657 / Type Ba4)</name>
    <dbReference type="NCBI Taxonomy" id="515621"/>
    <lineage>
        <taxon>Bacteria</taxon>
        <taxon>Bacillati</taxon>
        <taxon>Bacillota</taxon>
        <taxon>Clostridia</taxon>
        <taxon>Eubacteriales</taxon>
        <taxon>Clostridiaceae</taxon>
        <taxon>Clostridium</taxon>
    </lineage>
</organism>
<feature type="chain" id="PRO_1000213807" description="Cell division protein SepF">
    <location>
        <begin position="1"/>
        <end position="150"/>
    </location>
</feature>
<proteinExistence type="inferred from homology"/>
<gene>
    <name evidence="1" type="primary">sepF</name>
    <name type="ordered locus">CLJ_B1568</name>
</gene>
<name>SEPF_CLOB6</name>